<dbReference type="EC" id="2.3.2.23"/>
<dbReference type="EMBL" id="L19353">
    <property type="protein sequence ID" value="AAA32899.1"/>
    <property type="molecule type" value="Genomic_DNA"/>
</dbReference>
<dbReference type="EMBL" id="Y13031">
    <property type="protein sequence ID" value="CAA73476.1"/>
    <property type="molecule type" value="mRNA"/>
</dbReference>
<dbReference type="EMBL" id="DQ027017">
    <property type="protein sequence ID" value="AAY44843.1"/>
    <property type="molecule type" value="mRNA"/>
</dbReference>
<dbReference type="EMBL" id="AC002521">
    <property type="protein sequence ID" value="AAC05346.1"/>
    <property type="molecule type" value="Genomic_DNA"/>
</dbReference>
<dbReference type="EMBL" id="CP002685">
    <property type="protein sequence ID" value="AEC05621.1"/>
    <property type="molecule type" value="Genomic_DNA"/>
</dbReference>
<dbReference type="EMBL" id="CP002685">
    <property type="protein sequence ID" value="ANM63049.1"/>
    <property type="molecule type" value="Genomic_DNA"/>
</dbReference>
<dbReference type="EMBL" id="CP002685">
    <property type="protein sequence ID" value="ANM63050.1"/>
    <property type="molecule type" value="Genomic_DNA"/>
</dbReference>
<dbReference type="EMBL" id="CP002685">
    <property type="protein sequence ID" value="ANM63051.1"/>
    <property type="molecule type" value="Genomic_DNA"/>
</dbReference>
<dbReference type="EMBL" id="AF370558">
    <property type="protein sequence ID" value="AAK48985.1"/>
    <property type="molecule type" value="mRNA"/>
</dbReference>
<dbReference type="EMBL" id="AY072479">
    <property type="protein sequence ID" value="AAL66894.1"/>
    <property type="molecule type" value="mRNA"/>
</dbReference>
<dbReference type="PIR" id="S43783">
    <property type="entry name" value="S43783"/>
</dbReference>
<dbReference type="RefSeq" id="NP_001325162.1">
    <property type="nucleotide sequence ID" value="NM_001335136.1"/>
</dbReference>
<dbReference type="RefSeq" id="NP_001325163.1">
    <property type="nucleotide sequence ID" value="NM_001335134.1"/>
</dbReference>
<dbReference type="RefSeq" id="NP_001325164.1">
    <property type="nucleotide sequence ID" value="NM_001335135.1"/>
</dbReference>
<dbReference type="RefSeq" id="NP_565289.1">
    <property type="nucleotide sequence ID" value="NM_126331.4"/>
</dbReference>
<dbReference type="SMR" id="P42745"/>
<dbReference type="BioGRID" id="207">
    <property type="interactions" value="2"/>
</dbReference>
<dbReference type="FunCoup" id="P42745">
    <property type="interactions" value="3616"/>
</dbReference>
<dbReference type="IntAct" id="P42745">
    <property type="interactions" value="2"/>
</dbReference>
<dbReference type="STRING" id="3702.P42745"/>
<dbReference type="PaxDb" id="3702-AT2G02760.1"/>
<dbReference type="ProteomicsDB" id="228524"/>
<dbReference type="EnsemblPlants" id="AT2G02760.1">
    <property type="protein sequence ID" value="AT2G02760.1"/>
    <property type="gene ID" value="AT2G02760"/>
</dbReference>
<dbReference type="EnsemblPlants" id="AT2G02760.2">
    <property type="protein sequence ID" value="AT2G02760.2"/>
    <property type="gene ID" value="AT2G02760"/>
</dbReference>
<dbReference type="EnsemblPlants" id="AT2G02760.3">
    <property type="protein sequence ID" value="AT2G02760.3"/>
    <property type="gene ID" value="AT2G02760"/>
</dbReference>
<dbReference type="EnsemblPlants" id="AT2G02760.4">
    <property type="protein sequence ID" value="AT2G02760.4"/>
    <property type="gene ID" value="AT2G02760"/>
</dbReference>
<dbReference type="GeneID" id="814805"/>
<dbReference type="Gramene" id="AT2G02760.1">
    <property type="protein sequence ID" value="AT2G02760.1"/>
    <property type="gene ID" value="AT2G02760"/>
</dbReference>
<dbReference type="Gramene" id="AT2G02760.2">
    <property type="protein sequence ID" value="AT2G02760.2"/>
    <property type="gene ID" value="AT2G02760"/>
</dbReference>
<dbReference type="Gramene" id="AT2G02760.3">
    <property type="protein sequence ID" value="AT2G02760.3"/>
    <property type="gene ID" value="AT2G02760"/>
</dbReference>
<dbReference type="Gramene" id="AT2G02760.4">
    <property type="protein sequence ID" value="AT2G02760.4"/>
    <property type="gene ID" value="AT2G02760"/>
</dbReference>
<dbReference type="KEGG" id="ath:AT2G02760"/>
<dbReference type="Araport" id="AT2G02760"/>
<dbReference type="TAIR" id="AT2G02760">
    <property type="gene designation" value="UBC2"/>
</dbReference>
<dbReference type="eggNOG" id="KOG0419">
    <property type="taxonomic scope" value="Eukaryota"/>
</dbReference>
<dbReference type="HOGENOM" id="CLU_030988_10_2_1"/>
<dbReference type="InParanoid" id="P42745"/>
<dbReference type="OMA" id="NILLWHA"/>
<dbReference type="OrthoDB" id="1045763at2759"/>
<dbReference type="PhylomeDB" id="P42745"/>
<dbReference type="BRENDA" id="2.3.2.23">
    <property type="organism ID" value="399"/>
</dbReference>
<dbReference type="UniPathway" id="UPA00143"/>
<dbReference type="PRO" id="PR:P42745"/>
<dbReference type="Proteomes" id="UP000006548">
    <property type="component" value="Chromosome 2"/>
</dbReference>
<dbReference type="ExpressionAtlas" id="P42745">
    <property type="expression patterns" value="baseline and differential"/>
</dbReference>
<dbReference type="GO" id="GO:0005524">
    <property type="term" value="F:ATP binding"/>
    <property type="evidence" value="ECO:0007669"/>
    <property type="project" value="UniProtKB-KW"/>
</dbReference>
<dbReference type="GO" id="GO:0061631">
    <property type="term" value="F:ubiquitin conjugating enzyme activity"/>
    <property type="evidence" value="ECO:0007669"/>
    <property type="project" value="UniProtKB-EC"/>
</dbReference>
<dbReference type="GO" id="GO:0004842">
    <property type="term" value="F:ubiquitin-protein transferase activity"/>
    <property type="evidence" value="ECO:0000314"/>
    <property type="project" value="TAIR"/>
</dbReference>
<dbReference type="GO" id="GO:0016567">
    <property type="term" value="P:protein ubiquitination"/>
    <property type="evidence" value="ECO:0007669"/>
    <property type="project" value="UniProtKB-UniPathway"/>
</dbReference>
<dbReference type="GO" id="GO:0006511">
    <property type="term" value="P:ubiquitin-dependent protein catabolic process"/>
    <property type="evidence" value="ECO:0000314"/>
    <property type="project" value="TAIR"/>
</dbReference>
<dbReference type="GO" id="GO:0010228">
    <property type="term" value="P:vegetative to reproductive phase transition of meristem"/>
    <property type="evidence" value="ECO:0000316"/>
    <property type="project" value="TAIR"/>
</dbReference>
<dbReference type="CDD" id="cd23790">
    <property type="entry name" value="UBCc_UBE2A_2B"/>
    <property type="match status" value="1"/>
</dbReference>
<dbReference type="FunFam" id="3.10.110.10:FF:000017">
    <property type="entry name" value="Ubiquitin-conjugating enzyme E2 2"/>
    <property type="match status" value="1"/>
</dbReference>
<dbReference type="Gene3D" id="3.10.110.10">
    <property type="entry name" value="Ubiquitin Conjugating Enzyme"/>
    <property type="match status" value="1"/>
</dbReference>
<dbReference type="InterPro" id="IPR050113">
    <property type="entry name" value="Ub_conjugating_enzyme"/>
</dbReference>
<dbReference type="InterPro" id="IPR000608">
    <property type="entry name" value="UBQ-conjugat_E2_core"/>
</dbReference>
<dbReference type="InterPro" id="IPR023313">
    <property type="entry name" value="UBQ-conjugating_AS"/>
</dbReference>
<dbReference type="InterPro" id="IPR016135">
    <property type="entry name" value="UBQ-conjugating_enzyme/RWD"/>
</dbReference>
<dbReference type="PANTHER" id="PTHR24067">
    <property type="entry name" value="UBIQUITIN-CONJUGATING ENZYME E2"/>
    <property type="match status" value="1"/>
</dbReference>
<dbReference type="Pfam" id="PF00179">
    <property type="entry name" value="UQ_con"/>
    <property type="match status" value="1"/>
</dbReference>
<dbReference type="SMART" id="SM00212">
    <property type="entry name" value="UBCc"/>
    <property type="match status" value="1"/>
</dbReference>
<dbReference type="SUPFAM" id="SSF54495">
    <property type="entry name" value="UBC-like"/>
    <property type="match status" value="1"/>
</dbReference>
<dbReference type="PROSITE" id="PS00183">
    <property type="entry name" value="UBC_1"/>
    <property type="match status" value="1"/>
</dbReference>
<dbReference type="PROSITE" id="PS50127">
    <property type="entry name" value="UBC_2"/>
    <property type="match status" value="1"/>
</dbReference>
<keyword id="KW-0067">ATP-binding</keyword>
<keyword id="KW-0547">Nucleotide-binding</keyword>
<keyword id="KW-1185">Reference proteome</keyword>
<keyword id="KW-0808">Transferase</keyword>
<keyword id="KW-0833">Ubl conjugation pathway</keyword>
<evidence type="ECO:0000255" key="1">
    <source>
        <dbReference type="PROSITE-ProRule" id="PRU00388"/>
    </source>
</evidence>
<evidence type="ECO:0000255" key="2">
    <source>
        <dbReference type="PROSITE-ProRule" id="PRU10133"/>
    </source>
</evidence>
<evidence type="ECO:0000269" key="3">
    <source>
    </source>
</evidence>
<evidence type="ECO:0000269" key="4">
    <source>
    </source>
</evidence>
<protein>
    <recommendedName>
        <fullName>Ubiquitin-conjugating enzyme E2 2</fullName>
        <ecNumber>2.3.2.23</ecNumber>
    </recommendedName>
    <alternativeName>
        <fullName>E2 ubiquitin-conjugating enzyme 2</fullName>
    </alternativeName>
    <alternativeName>
        <fullName>Ubiquitin carrier protein 2</fullName>
    </alternativeName>
    <alternativeName>
        <fullName>Ubiquitin-conjugating enzyme E2-17 kDa 2</fullName>
    </alternativeName>
    <alternativeName>
        <fullName>Ubiquitin-protein ligase 2</fullName>
    </alternativeName>
</protein>
<name>UBC2_ARATH</name>
<sequence>MSTPARKRLMRDFKRLQQDPPAGISGAPQDNNIMLWNAVIFGPDDTPWDGGTFKLSLQFSEDYPNKPPTVRFVSRMFHPNIYADGSICLDILQNQWSPIYDVAAILTSIQSLLCDPNPNSPANSEAARMFSESKREYNRRVREVVEQSWTAD</sequence>
<feature type="chain" id="PRO_0000082571" description="Ubiquitin-conjugating enzyme E2 2">
    <location>
        <begin position="1"/>
        <end position="152"/>
    </location>
</feature>
<feature type="domain" description="UBC core" evidence="1">
    <location>
        <begin position="4"/>
        <end position="150"/>
    </location>
</feature>
<feature type="active site" description="Glycyl thioester intermediate" evidence="1 2">
    <location>
        <position position="88"/>
    </location>
</feature>
<reference key="1">
    <citation type="journal article" date="1994" name="Plant Mol. Biol.">
        <title>Homologues of wheat ubiquitin-conjugating enzymes -- TaUBC1 and TaUBC4 are encoded by small multigene families in Arabidopsis thaliana.</title>
        <authorList>
            <person name="Sullivan M.L."/>
            <person name="Carpenter T.B."/>
            <person name="Vierstra R.D."/>
        </authorList>
    </citation>
    <scope>NUCLEOTIDE SEQUENCE [GENOMIC DNA]</scope>
    <source>
        <strain>cv. Columbia</strain>
        <tissue>Green leaf</tissue>
    </source>
</reference>
<reference key="2">
    <citation type="journal article" date="1997" name="Curr. Genet.">
        <title>Arabidopsis thaliana RAD6 homolog AtUBC2 complements UV sensitivity, but not N-end rule degradation deficiency, of Saccharomyces cerevisiae rad6 mutants.</title>
        <authorList>
            <person name="Zwirn P."/>
            <person name="Stary S."/>
            <person name="Luschnig C."/>
            <person name="Bachmair A."/>
        </authorList>
    </citation>
    <scope>NUCLEOTIDE SEQUENCE [MRNA]</scope>
    <source>
        <strain>cv. Columbia</strain>
    </source>
</reference>
<reference key="3">
    <citation type="journal article" date="2005" name="Plant Physiol.">
        <title>Genome analysis and functional characterization of the E2 and RING-type E3 ligase ubiquitination enzymes of Arabidopsis.</title>
        <authorList>
            <person name="Kraft E."/>
            <person name="Stone S.L."/>
            <person name="Ma L."/>
            <person name="Su N."/>
            <person name="Gao Y."/>
            <person name="Lau O.-S."/>
            <person name="Deng X.-W."/>
            <person name="Callis J."/>
        </authorList>
    </citation>
    <scope>NUCLEOTIDE SEQUENCE [MRNA]</scope>
    <scope>FUNCTION</scope>
    <scope>GENE FAMILY</scope>
    <scope>NOMENCLATURE</scope>
</reference>
<reference key="4">
    <citation type="journal article" date="1999" name="Nature">
        <title>Sequence and analysis of chromosome 2 of the plant Arabidopsis thaliana.</title>
        <authorList>
            <person name="Lin X."/>
            <person name="Kaul S."/>
            <person name="Rounsley S.D."/>
            <person name="Shea T.P."/>
            <person name="Benito M.-I."/>
            <person name="Town C.D."/>
            <person name="Fujii C.Y."/>
            <person name="Mason T.M."/>
            <person name="Bowman C.L."/>
            <person name="Barnstead M.E."/>
            <person name="Feldblyum T.V."/>
            <person name="Buell C.R."/>
            <person name="Ketchum K.A."/>
            <person name="Lee J.J."/>
            <person name="Ronning C.M."/>
            <person name="Koo H.L."/>
            <person name="Moffat K.S."/>
            <person name="Cronin L.A."/>
            <person name="Shen M."/>
            <person name="Pai G."/>
            <person name="Van Aken S."/>
            <person name="Umayam L."/>
            <person name="Tallon L.J."/>
            <person name="Gill J.E."/>
            <person name="Adams M.D."/>
            <person name="Carrera A.J."/>
            <person name="Creasy T.H."/>
            <person name="Goodman H.M."/>
            <person name="Somerville C.R."/>
            <person name="Copenhaver G.P."/>
            <person name="Preuss D."/>
            <person name="Nierman W.C."/>
            <person name="White O."/>
            <person name="Eisen J.A."/>
            <person name="Salzberg S.L."/>
            <person name="Fraser C.M."/>
            <person name="Venter J.C."/>
        </authorList>
    </citation>
    <scope>NUCLEOTIDE SEQUENCE [LARGE SCALE GENOMIC DNA]</scope>
    <source>
        <strain>cv. Columbia</strain>
    </source>
</reference>
<reference key="5">
    <citation type="journal article" date="2017" name="Plant J.">
        <title>Araport11: a complete reannotation of the Arabidopsis thaliana reference genome.</title>
        <authorList>
            <person name="Cheng C.Y."/>
            <person name="Krishnakumar V."/>
            <person name="Chan A.P."/>
            <person name="Thibaud-Nissen F."/>
            <person name="Schobel S."/>
            <person name="Town C.D."/>
        </authorList>
    </citation>
    <scope>GENOME REANNOTATION</scope>
    <source>
        <strain>cv. Columbia</strain>
    </source>
</reference>
<reference key="6">
    <citation type="journal article" date="2003" name="Science">
        <title>Empirical analysis of transcriptional activity in the Arabidopsis genome.</title>
        <authorList>
            <person name="Yamada K."/>
            <person name="Lim J."/>
            <person name="Dale J.M."/>
            <person name="Chen H."/>
            <person name="Shinn P."/>
            <person name="Palm C.J."/>
            <person name="Southwick A.M."/>
            <person name="Wu H.C."/>
            <person name="Kim C.J."/>
            <person name="Nguyen M."/>
            <person name="Pham P.K."/>
            <person name="Cheuk R.F."/>
            <person name="Karlin-Newmann G."/>
            <person name="Liu S.X."/>
            <person name="Lam B."/>
            <person name="Sakano H."/>
            <person name="Wu T."/>
            <person name="Yu G."/>
            <person name="Miranda M."/>
            <person name="Quach H.L."/>
            <person name="Tripp M."/>
            <person name="Chang C.H."/>
            <person name="Lee J.M."/>
            <person name="Toriumi M.J."/>
            <person name="Chan M.M."/>
            <person name="Tang C.C."/>
            <person name="Onodera C.S."/>
            <person name="Deng J.M."/>
            <person name="Akiyama K."/>
            <person name="Ansari Y."/>
            <person name="Arakawa T."/>
            <person name="Banh J."/>
            <person name="Banno F."/>
            <person name="Bowser L."/>
            <person name="Brooks S.Y."/>
            <person name="Carninci P."/>
            <person name="Chao Q."/>
            <person name="Choy N."/>
            <person name="Enju A."/>
            <person name="Goldsmith A.D."/>
            <person name="Gurjal M."/>
            <person name="Hansen N.F."/>
            <person name="Hayashizaki Y."/>
            <person name="Johnson-Hopson C."/>
            <person name="Hsuan V.W."/>
            <person name="Iida K."/>
            <person name="Karnes M."/>
            <person name="Khan S."/>
            <person name="Koesema E."/>
            <person name="Ishida J."/>
            <person name="Jiang P.X."/>
            <person name="Jones T."/>
            <person name="Kawai J."/>
            <person name="Kamiya A."/>
            <person name="Meyers C."/>
            <person name="Nakajima M."/>
            <person name="Narusaka M."/>
            <person name="Seki M."/>
            <person name="Sakurai T."/>
            <person name="Satou M."/>
            <person name="Tamse R."/>
            <person name="Vaysberg M."/>
            <person name="Wallender E.K."/>
            <person name="Wong C."/>
            <person name="Yamamura Y."/>
            <person name="Yuan S."/>
            <person name="Shinozaki K."/>
            <person name="Davis R.W."/>
            <person name="Theologis A."/>
            <person name="Ecker J.R."/>
        </authorList>
    </citation>
    <scope>NUCLEOTIDE SEQUENCE [LARGE SCALE MRNA]</scope>
    <source>
        <strain>cv. Columbia</strain>
    </source>
</reference>
<reference key="7">
    <citation type="journal article" date="1996" name="Plant Mol. Biol.">
        <title>Members of two gene families encoding ubiquitin-conjugating enzymes, AtUBC1-3 and AtUBC4-6, from Arabidopsis thaliana are differentially expressed.</title>
        <authorList>
            <person name="Thoma S."/>
            <person name="Sullivan M.L."/>
            <person name="Vierstra R.D."/>
        </authorList>
    </citation>
    <scope>TISSUE SPECIFICITY</scope>
    <scope>INDUCTION</scope>
</reference>
<gene>
    <name type="primary">UBC2</name>
    <name type="ordered locus">At2g02760</name>
    <name type="ORF">T20F6.10</name>
</gene>
<comment type="function">
    <text evidence="3">Accepts the ubiquitin from the E1 complex and catalyzes its covalent attachment to other proteins.</text>
</comment>
<comment type="catalytic activity">
    <reaction evidence="1 2">
        <text>S-ubiquitinyl-[E1 ubiquitin-activating enzyme]-L-cysteine + [E2 ubiquitin-conjugating enzyme]-L-cysteine = [E1 ubiquitin-activating enzyme]-L-cysteine + S-ubiquitinyl-[E2 ubiquitin-conjugating enzyme]-L-cysteine.</text>
        <dbReference type="EC" id="2.3.2.23"/>
    </reaction>
</comment>
<comment type="pathway">
    <text evidence="1">Protein modification; protein ubiquitination.</text>
</comment>
<comment type="tissue specificity">
    <text evidence="4">Expressed in all tissues examined. Lower levels found in leaves.</text>
</comment>
<comment type="induction">
    <text evidence="4">Not induced by heat shock.</text>
</comment>
<comment type="similarity">
    <text evidence="1">Belongs to the ubiquitin-conjugating enzyme family.</text>
</comment>
<proteinExistence type="evidence at transcript level"/>
<accession>P42745</accession>
<accession>Q4TZ07</accession>
<organism>
    <name type="scientific">Arabidopsis thaliana</name>
    <name type="common">Mouse-ear cress</name>
    <dbReference type="NCBI Taxonomy" id="3702"/>
    <lineage>
        <taxon>Eukaryota</taxon>
        <taxon>Viridiplantae</taxon>
        <taxon>Streptophyta</taxon>
        <taxon>Embryophyta</taxon>
        <taxon>Tracheophyta</taxon>
        <taxon>Spermatophyta</taxon>
        <taxon>Magnoliopsida</taxon>
        <taxon>eudicotyledons</taxon>
        <taxon>Gunneridae</taxon>
        <taxon>Pentapetalae</taxon>
        <taxon>rosids</taxon>
        <taxon>malvids</taxon>
        <taxon>Brassicales</taxon>
        <taxon>Brassicaceae</taxon>
        <taxon>Camelineae</taxon>
        <taxon>Arabidopsis</taxon>
    </lineage>
</organism>